<gene>
    <name evidence="1" type="primary">tolB</name>
    <name type="ordered locus">ECUMN_0828</name>
</gene>
<dbReference type="EMBL" id="CU928163">
    <property type="protein sequence ID" value="CAR12040.1"/>
    <property type="molecule type" value="Genomic_DNA"/>
</dbReference>
<dbReference type="RefSeq" id="WP_001295307.1">
    <property type="nucleotide sequence ID" value="NC_011751.1"/>
</dbReference>
<dbReference type="RefSeq" id="YP_002411586.1">
    <property type="nucleotide sequence ID" value="NC_011751.1"/>
</dbReference>
<dbReference type="SMR" id="B7N9Y9"/>
<dbReference type="STRING" id="585056.ECUMN_0828"/>
<dbReference type="GeneID" id="93776744"/>
<dbReference type="KEGG" id="eum:ECUMN_0828"/>
<dbReference type="PATRIC" id="fig|585056.7.peg.1032"/>
<dbReference type="HOGENOM" id="CLU_047123_0_0_6"/>
<dbReference type="Proteomes" id="UP000007097">
    <property type="component" value="Chromosome"/>
</dbReference>
<dbReference type="GO" id="GO:0042597">
    <property type="term" value="C:periplasmic space"/>
    <property type="evidence" value="ECO:0007669"/>
    <property type="project" value="UniProtKB-SubCell"/>
</dbReference>
<dbReference type="GO" id="GO:0051301">
    <property type="term" value="P:cell division"/>
    <property type="evidence" value="ECO:0007669"/>
    <property type="project" value="UniProtKB-UniRule"/>
</dbReference>
<dbReference type="GO" id="GO:0017038">
    <property type="term" value="P:protein import"/>
    <property type="evidence" value="ECO:0007669"/>
    <property type="project" value="InterPro"/>
</dbReference>
<dbReference type="FunFam" id="2.120.10.30:FF:000022">
    <property type="entry name" value="Tol-Pal system protein TolB"/>
    <property type="match status" value="1"/>
</dbReference>
<dbReference type="FunFam" id="3.40.50.10070:FF:000001">
    <property type="entry name" value="Tol-Pal system protein TolB"/>
    <property type="match status" value="1"/>
</dbReference>
<dbReference type="Gene3D" id="2.120.10.30">
    <property type="entry name" value="TolB, C-terminal domain"/>
    <property type="match status" value="1"/>
</dbReference>
<dbReference type="Gene3D" id="3.40.50.10070">
    <property type="entry name" value="TolB, N-terminal domain"/>
    <property type="match status" value="1"/>
</dbReference>
<dbReference type="HAMAP" id="MF_00671">
    <property type="entry name" value="TolB"/>
    <property type="match status" value="1"/>
</dbReference>
<dbReference type="InterPro" id="IPR011042">
    <property type="entry name" value="6-blade_b-propeller_TolB-like"/>
</dbReference>
<dbReference type="InterPro" id="IPR011659">
    <property type="entry name" value="PD40"/>
</dbReference>
<dbReference type="InterPro" id="IPR014167">
    <property type="entry name" value="Tol-Pal_TolB"/>
</dbReference>
<dbReference type="InterPro" id="IPR007195">
    <property type="entry name" value="TolB_N"/>
</dbReference>
<dbReference type="NCBIfam" id="TIGR02800">
    <property type="entry name" value="propeller_TolB"/>
    <property type="match status" value="1"/>
</dbReference>
<dbReference type="PANTHER" id="PTHR36842:SF1">
    <property type="entry name" value="PROTEIN TOLB"/>
    <property type="match status" value="1"/>
</dbReference>
<dbReference type="PANTHER" id="PTHR36842">
    <property type="entry name" value="PROTEIN TOLB HOMOLOG"/>
    <property type="match status" value="1"/>
</dbReference>
<dbReference type="Pfam" id="PF07676">
    <property type="entry name" value="PD40"/>
    <property type="match status" value="4"/>
</dbReference>
<dbReference type="Pfam" id="PF04052">
    <property type="entry name" value="TolB_N"/>
    <property type="match status" value="1"/>
</dbReference>
<dbReference type="SUPFAM" id="SSF52964">
    <property type="entry name" value="TolB, N-terminal domain"/>
    <property type="match status" value="1"/>
</dbReference>
<dbReference type="SUPFAM" id="SSF69304">
    <property type="entry name" value="Tricorn protease N-terminal domain"/>
    <property type="match status" value="1"/>
</dbReference>
<protein>
    <recommendedName>
        <fullName evidence="1">Tol-Pal system protein TolB</fullName>
    </recommendedName>
</protein>
<proteinExistence type="inferred from homology"/>
<name>TOLB_ECOLU</name>
<accession>B7N9Y9</accession>
<keyword id="KW-0131">Cell cycle</keyword>
<keyword id="KW-0132">Cell division</keyword>
<keyword id="KW-0574">Periplasm</keyword>
<keyword id="KW-0732">Signal</keyword>
<reference key="1">
    <citation type="journal article" date="2009" name="PLoS Genet.">
        <title>Organised genome dynamics in the Escherichia coli species results in highly diverse adaptive paths.</title>
        <authorList>
            <person name="Touchon M."/>
            <person name="Hoede C."/>
            <person name="Tenaillon O."/>
            <person name="Barbe V."/>
            <person name="Baeriswyl S."/>
            <person name="Bidet P."/>
            <person name="Bingen E."/>
            <person name="Bonacorsi S."/>
            <person name="Bouchier C."/>
            <person name="Bouvet O."/>
            <person name="Calteau A."/>
            <person name="Chiapello H."/>
            <person name="Clermont O."/>
            <person name="Cruveiller S."/>
            <person name="Danchin A."/>
            <person name="Diard M."/>
            <person name="Dossat C."/>
            <person name="Karoui M.E."/>
            <person name="Frapy E."/>
            <person name="Garry L."/>
            <person name="Ghigo J.M."/>
            <person name="Gilles A.M."/>
            <person name="Johnson J."/>
            <person name="Le Bouguenec C."/>
            <person name="Lescat M."/>
            <person name="Mangenot S."/>
            <person name="Martinez-Jehanne V."/>
            <person name="Matic I."/>
            <person name="Nassif X."/>
            <person name="Oztas S."/>
            <person name="Petit M.A."/>
            <person name="Pichon C."/>
            <person name="Rouy Z."/>
            <person name="Ruf C.S."/>
            <person name="Schneider D."/>
            <person name="Tourret J."/>
            <person name="Vacherie B."/>
            <person name="Vallenet D."/>
            <person name="Medigue C."/>
            <person name="Rocha E.P.C."/>
            <person name="Denamur E."/>
        </authorList>
    </citation>
    <scope>NUCLEOTIDE SEQUENCE [LARGE SCALE GENOMIC DNA]</scope>
    <source>
        <strain>UMN026 / ExPEC</strain>
    </source>
</reference>
<comment type="function">
    <text evidence="1">Part of the Tol-Pal system, which plays a role in outer membrane invagination during cell division and is important for maintaining outer membrane integrity. TolB occupies a key intermediary position in the Tol-Pal system because it communicates directly with both membrane-embedded components, Pal in the outer membrane and TolA in the inner membrane.</text>
</comment>
<comment type="subunit">
    <text evidence="1">The Tol-Pal system is composed of five core proteins: the inner membrane proteins TolA, TolQ and TolR, the periplasmic protein TolB and the outer membrane protein Pal. They form a network linking the inner and outer membranes and the peptidoglycan layer.</text>
</comment>
<comment type="subcellular location">
    <subcellularLocation>
        <location evidence="1">Periplasm</location>
    </subcellularLocation>
</comment>
<comment type="similarity">
    <text evidence="1">Belongs to the TolB family.</text>
</comment>
<evidence type="ECO:0000255" key="1">
    <source>
        <dbReference type="HAMAP-Rule" id="MF_00671"/>
    </source>
</evidence>
<feature type="signal peptide" evidence="1">
    <location>
        <begin position="1"/>
        <end position="21"/>
    </location>
</feature>
<feature type="chain" id="PRO_1000131527" description="Tol-Pal system protein TolB" evidence="1">
    <location>
        <begin position="22"/>
        <end position="430"/>
    </location>
</feature>
<organism>
    <name type="scientific">Escherichia coli O17:K52:H18 (strain UMN026 / ExPEC)</name>
    <dbReference type="NCBI Taxonomy" id="585056"/>
    <lineage>
        <taxon>Bacteria</taxon>
        <taxon>Pseudomonadati</taxon>
        <taxon>Pseudomonadota</taxon>
        <taxon>Gammaproteobacteria</taxon>
        <taxon>Enterobacterales</taxon>
        <taxon>Enterobacteriaceae</taxon>
        <taxon>Escherichia</taxon>
    </lineage>
</organism>
<sequence length="430" mass="45956">MKQALRVAFGFLILWASVLHAEVRIVIDSGVDSGRPIGVVPFQWAGPGAAPEDIGGIVAADLRNSGKFNPLDRARLPQQPGSAQEVQPAAWSALGIDAVVVGQVTPNPDGSYNVAYQLVDTGGAPGTVLAQNSYKVNKQWLRYAGHTASDEVFEKLTGIKGAFRTRIAYVVQTNGGQFPYELRVSDYDGYNQFVVHRSPQPLMSPAWSPDGSKLAYVTFESGRSALVIQTLANGAVRQVASFPRHNGAPAFSPDGSKLAFALSKTGSLNLYVMDLASGQIRQVTDGRSNNTEPTWFPDSQNLAFTSDQAGRPQVYKVNINGGAPQRITWEGSQNQDADVSSDGKFMVMVSSNGGQQHIAKQDLATGGVQVLSSTFLDETPSLAPNGTMVIYSSSQGMGSVLNLVSTDGRFKARLPATDGQVKFPAWSPYL</sequence>